<evidence type="ECO:0000250" key="1">
    <source>
        <dbReference type="UniProtKB" id="P00403"/>
    </source>
</evidence>
<evidence type="ECO:0000250" key="2">
    <source>
        <dbReference type="UniProtKB" id="P00410"/>
    </source>
</evidence>
<evidence type="ECO:0000250" key="3">
    <source>
        <dbReference type="UniProtKB" id="P68530"/>
    </source>
</evidence>
<evidence type="ECO:0000305" key="4"/>
<sequence>MAYPVQLGFQDAASPIMEELLYFHDHTLMIMFLISSLVLYIISLMLTTELIHTSTMDAQEVETVWTILPAVILILIALPSLRILYMMDEISTPSLTLKTMGHQWYWSYEYTDYENLCFDSYMAPPSDLKPGELRLLEVDNRVVLPTELPIRMLISSEDVLHSWTIPSLGVKTDAIPGRLNQATLMASRPGVYYGQCSEICGANHSFMPIVLELVPLKHFEEWLLSML</sequence>
<reference key="1">
    <citation type="journal article" date="1994" name="J. Mol. Evol.">
        <title>Evolution of the primate cytochrome c oxidase subunit II gene.</title>
        <authorList>
            <person name="Adkins R.M."/>
            <person name="Honeycutt R.L."/>
        </authorList>
    </citation>
    <scope>NUCLEOTIDE SEQUENCE [GENOMIC DNA]</scope>
</reference>
<proteinExistence type="inferred from homology"/>
<feature type="chain" id="PRO_0000183593" description="Cytochrome c oxidase subunit 2">
    <location>
        <begin position="1"/>
        <end position="227"/>
    </location>
</feature>
<feature type="topological domain" description="Mitochondrial intermembrane" evidence="3">
    <location>
        <begin position="1"/>
        <end position="14"/>
    </location>
</feature>
<feature type="transmembrane region" description="Helical; Name=I" evidence="3">
    <location>
        <begin position="15"/>
        <end position="45"/>
    </location>
</feature>
<feature type="topological domain" description="Mitochondrial matrix" evidence="3">
    <location>
        <begin position="46"/>
        <end position="59"/>
    </location>
</feature>
<feature type="transmembrane region" description="Helical; Name=II" evidence="3">
    <location>
        <begin position="60"/>
        <end position="87"/>
    </location>
</feature>
<feature type="topological domain" description="Mitochondrial intermembrane" evidence="3">
    <location>
        <begin position="88"/>
        <end position="227"/>
    </location>
</feature>
<feature type="binding site" evidence="3">
    <location>
        <position position="161"/>
    </location>
    <ligand>
        <name>Cu cation</name>
        <dbReference type="ChEBI" id="CHEBI:23378"/>
        <label>A1</label>
    </ligand>
</feature>
<feature type="binding site" evidence="3">
    <location>
        <position position="196"/>
    </location>
    <ligand>
        <name>Cu cation</name>
        <dbReference type="ChEBI" id="CHEBI:23378"/>
        <label>A1</label>
    </ligand>
</feature>
<feature type="binding site" evidence="3">
    <location>
        <position position="196"/>
    </location>
    <ligand>
        <name>Cu cation</name>
        <dbReference type="ChEBI" id="CHEBI:23378"/>
        <label>A2</label>
    </ligand>
</feature>
<feature type="binding site" evidence="3">
    <location>
        <position position="198"/>
    </location>
    <ligand>
        <name>Cu cation</name>
        <dbReference type="ChEBI" id="CHEBI:23378"/>
        <label>A2</label>
    </ligand>
</feature>
<feature type="binding site" evidence="3">
    <location>
        <position position="198"/>
    </location>
    <ligand>
        <name>Mg(2+)</name>
        <dbReference type="ChEBI" id="CHEBI:18420"/>
        <note>ligand shared with MT-CO1</note>
    </ligand>
</feature>
<feature type="binding site" evidence="3">
    <location>
        <position position="200"/>
    </location>
    <ligand>
        <name>Cu cation</name>
        <dbReference type="ChEBI" id="CHEBI:23378"/>
        <label>A1</label>
    </ligand>
</feature>
<feature type="binding site" evidence="3">
    <location>
        <position position="200"/>
    </location>
    <ligand>
        <name>Cu cation</name>
        <dbReference type="ChEBI" id="CHEBI:23378"/>
        <label>A2</label>
    </ligand>
</feature>
<feature type="binding site" evidence="3">
    <location>
        <position position="204"/>
    </location>
    <ligand>
        <name>Cu cation</name>
        <dbReference type="ChEBI" id="CHEBI:23378"/>
        <label>A2</label>
    </ligand>
</feature>
<feature type="binding site" evidence="3">
    <location>
        <position position="207"/>
    </location>
    <ligand>
        <name>Cu cation</name>
        <dbReference type="ChEBI" id="CHEBI:23378"/>
        <label>A1</label>
    </ligand>
</feature>
<accession>P98033</accession>
<geneLocation type="mitochondrion"/>
<organism>
    <name type="scientific">Eulemur macaco</name>
    <name type="common">Black lemur</name>
    <name type="synonym">Petterus macaco</name>
    <dbReference type="NCBI Taxonomy" id="30602"/>
    <lineage>
        <taxon>Eukaryota</taxon>
        <taxon>Metazoa</taxon>
        <taxon>Chordata</taxon>
        <taxon>Craniata</taxon>
        <taxon>Vertebrata</taxon>
        <taxon>Euteleostomi</taxon>
        <taxon>Mammalia</taxon>
        <taxon>Eutheria</taxon>
        <taxon>Euarchontoglires</taxon>
        <taxon>Primates</taxon>
        <taxon>Strepsirrhini</taxon>
        <taxon>Lemuriformes</taxon>
        <taxon>Lemuridae</taxon>
        <taxon>Eulemur</taxon>
    </lineage>
</organism>
<dbReference type="EC" id="7.1.1.9"/>
<dbReference type="EMBL" id="L22777">
    <property type="protein sequence ID" value="AAA20563.1"/>
    <property type="molecule type" value="Genomic_DNA"/>
</dbReference>
<dbReference type="PIR" id="I37021">
    <property type="entry name" value="I37021"/>
</dbReference>
<dbReference type="SMR" id="P98033"/>
<dbReference type="GO" id="GO:0005743">
    <property type="term" value="C:mitochondrial inner membrane"/>
    <property type="evidence" value="ECO:0007669"/>
    <property type="project" value="UniProtKB-SubCell"/>
</dbReference>
<dbReference type="GO" id="GO:0045277">
    <property type="term" value="C:respiratory chain complex IV"/>
    <property type="evidence" value="ECO:0000250"/>
    <property type="project" value="UniProtKB"/>
</dbReference>
<dbReference type="GO" id="GO:0005507">
    <property type="term" value="F:copper ion binding"/>
    <property type="evidence" value="ECO:0007669"/>
    <property type="project" value="InterPro"/>
</dbReference>
<dbReference type="GO" id="GO:0004129">
    <property type="term" value="F:cytochrome-c oxidase activity"/>
    <property type="evidence" value="ECO:0007669"/>
    <property type="project" value="UniProtKB-EC"/>
</dbReference>
<dbReference type="GO" id="GO:0042773">
    <property type="term" value="P:ATP synthesis coupled electron transport"/>
    <property type="evidence" value="ECO:0007669"/>
    <property type="project" value="TreeGrafter"/>
</dbReference>
<dbReference type="CDD" id="cd13912">
    <property type="entry name" value="CcO_II_C"/>
    <property type="match status" value="1"/>
</dbReference>
<dbReference type="FunFam" id="1.10.287.90:FF:000001">
    <property type="entry name" value="Cytochrome c oxidase subunit 2"/>
    <property type="match status" value="1"/>
</dbReference>
<dbReference type="FunFam" id="2.60.40.420:FF:000001">
    <property type="entry name" value="Cytochrome c oxidase subunit 2"/>
    <property type="match status" value="1"/>
</dbReference>
<dbReference type="Gene3D" id="1.10.287.90">
    <property type="match status" value="1"/>
</dbReference>
<dbReference type="Gene3D" id="2.60.40.420">
    <property type="entry name" value="Cupredoxins - blue copper proteins"/>
    <property type="match status" value="1"/>
</dbReference>
<dbReference type="InterPro" id="IPR045187">
    <property type="entry name" value="CcO_II"/>
</dbReference>
<dbReference type="InterPro" id="IPR002429">
    <property type="entry name" value="CcO_II-like_C"/>
</dbReference>
<dbReference type="InterPro" id="IPR034210">
    <property type="entry name" value="CcO_II_C"/>
</dbReference>
<dbReference type="InterPro" id="IPR001505">
    <property type="entry name" value="Copper_CuA"/>
</dbReference>
<dbReference type="InterPro" id="IPR008972">
    <property type="entry name" value="Cupredoxin"/>
</dbReference>
<dbReference type="InterPro" id="IPR014222">
    <property type="entry name" value="Cyt_c_oxidase_su2"/>
</dbReference>
<dbReference type="InterPro" id="IPR011759">
    <property type="entry name" value="Cyt_c_oxidase_su2_TM_dom"/>
</dbReference>
<dbReference type="InterPro" id="IPR036257">
    <property type="entry name" value="Cyt_c_oxidase_su2_TM_sf"/>
</dbReference>
<dbReference type="NCBIfam" id="TIGR02866">
    <property type="entry name" value="CoxB"/>
    <property type="match status" value="1"/>
</dbReference>
<dbReference type="PANTHER" id="PTHR22888:SF9">
    <property type="entry name" value="CYTOCHROME C OXIDASE SUBUNIT 2"/>
    <property type="match status" value="1"/>
</dbReference>
<dbReference type="PANTHER" id="PTHR22888">
    <property type="entry name" value="CYTOCHROME C OXIDASE, SUBUNIT II"/>
    <property type="match status" value="1"/>
</dbReference>
<dbReference type="Pfam" id="PF00116">
    <property type="entry name" value="COX2"/>
    <property type="match status" value="1"/>
</dbReference>
<dbReference type="Pfam" id="PF02790">
    <property type="entry name" value="COX2_TM"/>
    <property type="match status" value="1"/>
</dbReference>
<dbReference type="PRINTS" id="PR01166">
    <property type="entry name" value="CYCOXIDASEII"/>
</dbReference>
<dbReference type="SUPFAM" id="SSF49503">
    <property type="entry name" value="Cupredoxins"/>
    <property type="match status" value="1"/>
</dbReference>
<dbReference type="SUPFAM" id="SSF81464">
    <property type="entry name" value="Cytochrome c oxidase subunit II-like, transmembrane region"/>
    <property type="match status" value="1"/>
</dbReference>
<dbReference type="PROSITE" id="PS00078">
    <property type="entry name" value="COX2"/>
    <property type="match status" value="1"/>
</dbReference>
<dbReference type="PROSITE" id="PS50857">
    <property type="entry name" value="COX2_CUA"/>
    <property type="match status" value="1"/>
</dbReference>
<dbReference type="PROSITE" id="PS50999">
    <property type="entry name" value="COX2_TM"/>
    <property type="match status" value="1"/>
</dbReference>
<protein>
    <recommendedName>
        <fullName>Cytochrome c oxidase subunit 2</fullName>
        <ecNumber>7.1.1.9</ecNumber>
    </recommendedName>
    <alternativeName>
        <fullName>Cytochrome c oxidase polypeptide II</fullName>
    </alternativeName>
</protein>
<gene>
    <name type="primary">MT-CO2</name>
    <name type="synonym">COII</name>
    <name type="synonym">COX2</name>
    <name type="synonym">COXII</name>
    <name type="synonym">MTCO2</name>
</gene>
<comment type="function">
    <text evidence="2">Component of the cytochrome c oxidase, the last enzyme in the mitochondrial electron transport chain which drives oxidative phosphorylation. The respiratory chain contains 3 multisubunit complexes succinate dehydrogenase (complex II, CII), ubiquinol-cytochrome c oxidoreductase (cytochrome b-c1 complex, complex III, CIII) and cytochrome c oxidase (complex IV, CIV), that cooperate to transfer electrons derived from NADH and succinate to molecular oxygen, creating an electrochemical gradient over the inner membrane that drives transmembrane transport and the ATP synthase. Cytochrome c oxidase is the component of the respiratory chain that catalyzes the reduction of oxygen to water. Electrons originating from reduced cytochrome c in the intermembrane space (IMS) are transferred via the dinuclear copper A center (CU(A)) of subunit 2 and heme A of subunit 1 to the active site in subunit 1, a binuclear center (BNC) formed by heme A3 and copper B (CU(B)). The BNC reduces molecular oxygen to 2 water molecules using 4 electrons from cytochrome c in the IMS and 4 protons from the mitochondrial matrix.</text>
</comment>
<comment type="catalytic activity">
    <reaction evidence="2">
        <text>4 Fe(II)-[cytochrome c] + O2 + 8 H(+)(in) = 4 Fe(III)-[cytochrome c] + 2 H2O + 4 H(+)(out)</text>
        <dbReference type="Rhea" id="RHEA:11436"/>
        <dbReference type="Rhea" id="RHEA-COMP:10350"/>
        <dbReference type="Rhea" id="RHEA-COMP:14399"/>
        <dbReference type="ChEBI" id="CHEBI:15377"/>
        <dbReference type="ChEBI" id="CHEBI:15378"/>
        <dbReference type="ChEBI" id="CHEBI:15379"/>
        <dbReference type="ChEBI" id="CHEBI:29033"/>
        <dbReference type="ChEBI" id="CHEBI:29034"/>
        <dbReference type="EC" id="7.1.1.9"/>
    </reaction>
    <physiologicalReaction direction="left-to-right" evidence="2">
        <dbReference type="Rhea" id="RHEA:11437"/>
    </physiologicalReaction>
</comment>
<comment type="cofactor">
    <cofactor evidence="3">
        <name>Cu cation</name>
        <dbReference type="ChEBI" id="CHEBI:23378"/>
    </cofactor>
    <text evidence="3">Binds a dinuclear copper A center per subunit.</text>
</comment>
<comment type="subunit">
    <text evidence="1 3">Component of the cytochrome c oxidase (complex IV, CIV), a multisubunit enzyme composed of 14 subunits. The complex is composed of a catalytic core of 3 subunits MT-CO1, MT-CO2 and MT-CO3, encoded in the mitochondrial DNA, and 11 supernumerary subunits COX4I, COX5A, COX5B, COX6A, COX6B, COX6C, COX7A, COX7B, COX7C, COX8 and NDUFA4, which are encoded in the nuclear genome. The complex exists as a monomer or a dimer and forms supercomplexes (SCs) in the inner mitochondrial membrane with NADH-ubiquinone oxidoreductase (complex I, CI) and ubiquinol-cytochrome c oxidoreductase (cytochrome b-c1 complex, complex III, CIII), resulting in different assemblies (supercomplex SCI(1)III(2)IV(1) and megacomplex MCI(2)III(2)IV(2)) (By similarity). Found in a complex with TMEM177, COA6, COX18, COX20, SCO1 and SCO2. Interacts with TMEM177 in a COX20-dependent manner. Interacts with COX20. Interacts with COX16 (By similarity).</text>
</comment>
<comment type="subcellular location">
    <subcellularLocation>
        <location evidence="3">Mitochondrion inner membrane</location>
        <topology evidence="3">Multi-pass membrane protein</topology>
    </subcellularLocation>
</comment>
<comment type="similarity">
    <text evidence="4">Belongs to the cytochrome c oxidase subunit 2 family.</text>
</comment>
<keyword id="KW-0186">Copper</keyword>
<keyword id="KW-0249">Electron transport</keyword>
<keyword id="KW-0460">Magnesium</keyword>
<keyword id="KW-0472">Membrane</keyword>
<keyword id="KW-0479">Metal-binding</keyword>
<keyword id="KW-0496">Mitochondrion</keyword>
<keyword id="KW-0999">Mitochondrion inner membrane</keyword>
<keyword id="KW-0679">Respiratory chain</keyword>
<keyword id="KW-1278">Translocase</keyword>
<keyword id="KW-0812">Transmembrane</keyword>
<keyword id="KW-1133">Transmembrane helix</keyword>
<keyword id="KW-0813">Transport</keyword>
<name>COX2_EULMA</name>